<sequence>MITPKVLSGFKDRLPKDAIQKAQLLAKVSVVFQSFGFVPIETPHLEYAEALLPDASSDIQKEIYRFKDHGDRDVALRFDLTVPLARFVSLHHQILGMPFKRYAIGNVFRGERAQKGRYREFTQCDFDFIGSESLVCDAEIIQVIIASLKALDLEDFCVSINHRKILNGICEYFGVSQVNEALRIVDKLEKIGLDGVGEELKKECDLNSNTIKELLEMVQIKQNDLSHAEFFEKIAYLKDYNENLKKGIQDLERLYQLLGDLQISQNLYKIDFSIARGLGYYTGIVYETTLNDMKSLGSVCSGGRYDHLTKNFSKENLQGVGASIGIDRLIVALSEMQLLDERSTQAKVLIACMHEEYFSYANRLAESLRQSGIFSEVYPEAQKIKKPFSYANHKGHEFVAVIGEEEFKSETLSLKNMHSGMQLNCLSFLKALEIIGENDEDL</sequence>
<feature type="chain" id="PRO_1000095561" description="Histidine--tRNA ligase">
    <location>
        <begin position="1"/>
        <end position="442"/>
    </location>
</feature>
<keyword id="KW-0030">Aminoacyl-tRNA synthetase</keyword>
<keyword id="KW-0067">ATP-binding</keyword>
<keyword id="KW-0963">Cytoplasm</keyword>
<keyword id="KW-0436">Ligase</keyword>
<keyword id="KW-0547">Nucleotide-binding</keyword>
<keyword id="KW-0648">Protein biosynthesis</keyword>
<keyword id="KW-1185">Reference proteome</keyword>
<evidence type="ECO:0000255" key="1">
    <source>
        <dbReference type="HAMAP-Rule" id="MF_00127"/>
    </source>
</evidence>
<organism>
    <name type="scientific">Helicobacter pylori (strain G27)</name>
    <dbReference type="NCBI Taxonomy" id="563041"/>
    <lineage>
        <taxon>Bacteria</taxon>
        <taxon>Pseudomonadati</taxon>
        <taxon>Campylobacterota</taxon>
        <taxon>Epsilonproteobacteria</taxon>
        <taxon>Campylobacterales</taxon>
        <taxon>Helicobacteraceae</taxon>
        <taxon>Helicobacter</taxon>
    </lineage>
</organism>
<name>SYH_HELPG</name>
<dbReference type="EC" id="6.1.1.21" evidence="1"/>
<dbReference type="EMBL" id="CP001173">
    <property type="protein sequence ID" value="ACI27885.1"/>
    <property type="molecule type" value="Genomic_DNA"/>
</dbReference>
<dbReference type="RefSeq" id="WP_000632444.1">
    <property type="nucleotide sequence ID" value="NC_011333.1"/>
</dbReference>
<dbReference type="SMR" id="B5Z8I6"/>
<dbReference type="KEGG" id="hpg:HPG27_1135"/>
<dbReference type="HOGENOM" id="CLU_025113_3_0_7"/>
<dbReference type="Proteomes" id="UP000001735">
    <property type="component" value="Chromosome"/>
</dbReference>
<dbReference type="GO" id="GO:0005737">
    <property type="term" value="C:cytoplasm"/>
    <property type="evidence" value="ECO:0007669"/>
    <property type="project" value="UniProtKB-SubCell"/>
</dbReference>
<dbReference type="GO" id="GO:0005524">
    <property type="term" value="F:ATP binding"/>
    <property type="evidence" value="ECO:0007669"/>
    <property type="project" value="UniProtKB-UniRule"/>
</dbReference>
<dbReference type="GO" id="GO:0004821">
    <property type="term" value="F:histidine-tRNA ligase activity"/>
    <property type="evidence" value="ECO:0007669"/>
    <property type="project" value="UniProtKB-UniRule"/>
</dbReference>
<dbReference type="GO" id="GO:0006427">
    <property type="term" value="P:histidyl-tRNA aminoacylation"/>
    <property type="evidence" value="ECO:0007669"/>
    <property type="project" value="UniProtKB-UniRule"/>
</dbReference>
<dbReference type="CDD" id="cd00773">
    <property type="entry name" value="HisRS-like_core"/>
    <property type="match status" value="1"/>
</dbReference>
<dbReference type="CDD" id="cd00859">
    <property type="entry name" value="HisRS_anticodon"/>
    <property type="match status" value="1"/>
</dbReference>
<dbReference type="FunFam" id="3.30.930.10:FF:000152">
    <property type="entry name" value="Histidine--tRNA ligase"/>
    <property type="match status" value="1"/>
</dbReference>
<dbReference type="Gene3D" id="3.40.50.800">
    <property type="entry name" value="Anticodon-binding domain"/>
    <property type="match status" value="1"/>
</dbReference>
<dbReference type="Gene3D" id="3.30.930.10">
    <property type="entry name" value="Bira Bifunctional Protein, Domain 2"/>
    <property type="match status" value="1"/>
</dbReference>
<dbReference type="HAMAP" id="MF_00127">
    <property type="entry name" value="His_tRNA_synth"/>
    <property type="match status" value="1"/>
</dbReference>
<dbReference type="InterPro" id="IPR006195">
    <property type="entry name" value="aa-tRNA-synth_II"/>
</dbReference>
<dbReference type="InterPro" id="IPR045864">
    <property type="entry name" value="aa-tRNA-synth_II/BPL/LPL"/>
</dbReference>
<dbReference type="InterPro" id="IPR004154">
    <property type="entry name" value="Anticodon-bd"/>
</dbReference>
<dbReference type="InterPro" id="IPR036621">
    <property type="entry name" value="Anticodon-bd_dom_sf"/>
</dbReference>
<dbReference type="InterPro" id="IPR015807">
    <property type="entry name" value="His-tRNA-ligase"/>
</dbReference>
<dbReference type="InterPro" id="IPR041715">
    <property type="entry name" value="HisRS-like_core"/>
</dbReference>
<dbReference type="InterPro" id="IPR004516">
    <property type="entry name" value="HisRS/HisZ"/>
</dbReference>
<dbReference type="InterPro" id="IPR033656">
    <property type="entry name" value="HisRS_anticodon"/>
</dbReference>
<dbReference type="NCBIfam" id="TIGR00442">
    <property type="entry name" value="hisS"/>
    <property type="match status" value="1"/>
</dbReference>
<dbReference type="PANTHER" id="PTHR11476:SF7">
    <property type="entry name" value="HISTIDINE--TRNA LIGASE"/>
    <property type="match status" value="1"/>
</dbReference>
<dbReference type="PANTHER" id="PTHR11476">
    <property type="entry name" value="HISTIDYL-TRNA SYNTHETASE"/>
    <property type="match status" value="1"/>
</dbReference>
<dbReference type="Pfam" id="PF03129">
    <property type="entry name" value="HGTP_anticodon"/>
    <property type="match status" value="1"/>
</dbReference>
<dbReference type="Pfam" id="PF13393">
    <property type="entry name" value="tRNA-synt_His"/>
    <property type="match status" value="1"/>
</dbReference>
<dbReference type="PIRSF" id="PIRSF001549">
    <property type="entry name" value="His-tRNA_synth"/>
    <property type="match status" value="1"/>
</dbReference>
<dbReference type="SUPFAM" id="SSF52954">
    <property type="entry name" value="Class II aaRS ABD-related"/>
    <property type="match status" value="1"/>
</dbReference>
<dbReference type="SUPFAM" id="SSF55681">
    <property type="entry name" value="Class II aaRS and biotin synthetases"/>
    <property type="match status" value="1"/>
</dbReference>
<dbReference type="PROSITE" id="PS50862">
    <property type="entry name" value="AA_TRNA_LIGASE_II"/>
    <property type="match status" value="1"/>
</dbReference>
<reference key="1">
    <citation type="journal article" date="2009" name="J. Bacteriol.">
        <title>The complete genome sequence of Helicobacter pylori strain G27.</title>
        <authorList>
            <person name="Baltrus D.A."/>
            <person name="Amieva M.R."/>
            <person name="Covacci A."/>
            <person name="Lowe T.M."/>
            <person name="Merrell D.S."/>
            <person name="Ottemann K.M."/>
            <person name="Stein M."/>
            <person name="Salama N.R."/>
            <person name="Guillemin K."/>
        </authorList>
    </citation>
    <scope>NUCLEOTIDE SEQUENCE [LARGE SCALE GENOMIC DNA]</scope>
    <source>
        <strain>G27</strain>
    </source>
</reference>
<comment type="catalytic activity">
    <reaction evidence="1">
        <text>tRNA(His) + L-histidine + ATP = L-histidyl-tRNA(His) + AMP + diphosphate + H(+)</text>
        <dbReference type="Rhea" id="RHEA:17313"/>
        <dbReference type="Rhea" id="RHEA-COMP:9665"/>
        <dbReference type="Rhea" id="RHEA-COMP:9689"/>
        <dbReference type="ChEBI" id="CHEBI:15378"/>
        <dbReference type="ChEBI" id="CHEBI:30616"/>
        <dbReference type="ChEBI" id="CHEBI:33019"/>
        <dbReference type="ChEBI" id="CHEBI:57595"/>
        <dbReference type="ChEBI" id="CHEBI:78442"/>
        <dbReference type="ChEBI" id="CHEBI:78527"/>
        <dbReference type="ChEBI" id="CHEBI:456215"/>
        <dbReference type="EC" id="6.1.1.21"/>
    </reaction>
</comment>
<comment type="subunit">
    <text evidence="1">Homodimer.</text>
</comment>
<comment type="subcellular location">
    <subcellularLocation>
        <location evidence="1">Cytoplasm</location>
    </subcellularLocation>
</comment>
<comment type="similarity">
    <text evidence="1">Belongs to the class-II aminoacyl-tRNA synthetase family.</text>
</comment>
<gene>
    <name evidence="1" type="primary">hisS</name>
    <name type="ordered locus">HPG27_1135</name>
</gene>
<proteinExistence type="inferred from homology"/>
<accession>B5Z8I6</accession>
<protein>
    <recommendedName>
        <fullName evidence="1">Histidine--tRNA ligase</fullName>
        <ecNumber evidence="1">6.1.1.21</ecNumber>
    </recommendedName>
    <alternativeName>
        <fullName evidence="1">Histidyl-tRNA synthetase</fullName>
        <shortName evidence="1">HisRS</shortName>
    </alternativeName>
</protein>